<evidence type="ECO:0000255" key="1">
    <source>
        <dbReference type="HAMAP-Rule" id="MF_01547"/>
    </source>
</evidence>
<evidence type="ECO:0000256" key="2">
    <source>
        <dbReference type="SAM" id="MobiDB-lite"/>
    </source>
</evidence>
<feature type="chain" id="PRO_0000282733" description="Ribosomal RNA large subunit methyltransferase E">
    <location>
        <begin position="1"/>
        <end position="220"/>
    </location>
</feature>
<feature type="region of interest" description="Disordered" evidence="2">
    <location>
        <begin position="198"/>
        <end position="220"/>
    </location>
</feature>
<feature type="active site" description="Proton acceptor" evidence="1">
    <location>
        <position position="173"/>
    </location>
</feature>
<feature type="binding site" evidence="1">
    <location>
        <position position="60"/>
    </location>
    <ligand>
        <name>S-adenosyl-L-methionine</name>
        <dbReference type="ChEBI" id="CHEBI:59789"/>
    </ligand>
</feature>
<feature type="binding site" evidence="1">
    <location>
        <position position="62"/>
    </location>
    <ligand>
        <name>S-adenosyl-L-methionine</name>
        <dbReference type="ChEBI" id="CHEBI:59789"/>
    </ligand>
</feature>
<feature type="binding site" evidence="1">
    <location>
        <position position="92"/>
    </location>
    <ligand>
        <name>S-adenosyl-L-methionine</name>
        <dbReference type="ChEBI" id="CHEBI:59789"/>
    </ligand>
</feature>
<feature type="binding site" evidence="1">
    <location>
        <position position="108"/>
    </location>
    <ligand>
        <name>S-adenosyl-L-methionine</name>
        <dbReference type="ChEBI" id="CHEBI:59789"/>
    </ligand>
</feature>
<feature type="binding site" evidence="1">
    <location>
        <position position="133"/>
    </location>
    <ligand>
        <name>S-adenosyl-L-methionine</name>
        <dbReference type="ChEBI" id="CHEBI:59789"/>
    </ligand>
</feature>
<gene>
    <name evidence="1" type="primary">rlmE</name>
    <name evidence="1" type="synonym">ftsJ</name>
    <name evidence="1" type="synonym">rrmJ</name>
    <name type="ordered locus">Bcen2424_1296</name>
</gene>
<protein>
    <recommendedName>
        <fullName evidence="1">Ribosomal RNA large subunit methyltransferase E</fullName>
        <ecNumber evidence="1">2.1.1.166</ecNumber>
    </recommendedName>
    <alternativeName>
        <fullName evidence="1">23S rRNA Um2552 methyltransferase</fullName>
    </alternativeName>
    <alternativeName>
        <fullName evidence="1">rRNA (uridine-2'-O-)-methyltransferase</fullName>
    </alternativeName>
</protein>
<sequence>MAKNRFNQHWLHDHINDPYVKMAQREGYRARAAYKLKEIDEQDKLIRPGQVIVDLGATPGSWSQYARNKLAQGKKRDAEREGGIDGTIVALDILPMEPIADVHFLQGDFREDDVLHQLEEVLEGRAVDLVISDMAPNLSGVASADAARIEHLCDLALEFAQNHLKPDGALLVKCFHGSGYSQIVEKFKQQFKVVAPRKPKASRDKSSETFILGRQLKHPR</sequence>
<proteinExistence type="inferred from homology"/>
<comment type="function">
    <text evidence="1">Specifically methylates the uridine in position 2552 of 23S rRNA at the 2'-O position of the ribose in the fully assembled 50S ribosomal subunit.</text>
</comment>
<comment type="catalytic activity">
    <reaction evidence="1">
        <text>uridine(2552) in 23S rRNA + S-adenosyl-L-methionine = 2'-O-methyluridine(2552) in 23S rRNA + S-adenosyl-L-homocysteine + H(+)</text>
        <dbReference type="Rhea" id="RHEA:42720"/>
        <dbReference type="Rhea" id="RHEA-COMP:10202"/>
        <dbReference type="Rhea" id="RHEA-COMP:10203"/>
        <dbReference type="ChEBI" id="CHEBI:15378"/>
        <dbReference type="ChEBI" id="CHEBI:57856"/>
        <dbReference type="ChEBI" id="CHEBI:59789"/>
        <dbReference type="ChEBI" id="CHEBI:65315"/>
        <dbReference type="ChEBI" id="CHEBI:74478"/>
        <dbReference type="EC" id="2.1.1.166"/>
    </reaction>
</comment>
<comment type="subcellular location">
    <subcellularLocation>
        <location evidence="1">Cytoplasm</location>
    </subcellularLocation>
</comment>
<comment type="similarity">
    <text evidence="1">Belongs to the class I-like SAM-binding methyltransferase superfamily. RNA methyltransferase RlmE family.</text>
</comment>
<reference key="1">
    <citation type="submission" date="2006-08" db="EMBL/GenBank/DDBJ databases">
        <title>Complete sequence of chromosome 1 of Burkholderia cenocepacia HI2424.</title>
        <authorList>
            <person name="Copeland A."/>
            <person name="Lucas S."/>
            <person name="Lapidus A."/>
            <person name="Barry K."/>
            <person name="Detter J.C."/>
            <person name="Glavina del Rio T."/>
            <person name="Hammon N."/>
            <person name="Israni S."/>
            <person name="Pitluck S."/>
            <person name="Chain P."/>
            <person name="Malfatti S."/>
            <person name="Shin M."/>
            <person name="Vergez L."/>
            <person name="Schmutz J."/>
            <person name="Larimer F."/>
            <person name="Land M."/>
            <person name="Hauser L."/>
            <person name="Kyrpides N."/>
            <person name="Kim E."/>
            <person name="LiPuma J.J."/>
            <person name="Gonzalez C.F."/>
            <person name="Konstantinidis K."/>
            <person name="Tiedje J.M."/>
            <person name="Richardson P."/>
        </authorList>
    </citation>
    <scope>NUCLEOTIDE SEQUENCE [LARGE SCALE GENOMIC DNA]</scope>
    <source>
        <strain>HI2424</strain>
    </source>
</reference>
<accession>A0K6C1</accession>
<dbReference type="EC" id="2.1.1.166" evidence="1"/>
<dbReference type="EMBL" id="CP000458">
    <property type="protein sequence ID" value="ABK08048.1"/>
    <property type="molecule type" value="Genomic_DNA"/>
</dbReference>
<dbReference type="RefSeq" id="WP_006476343.1">
    <property type="nucleotide sequence ID" value="NC_008542.1"/>
</dbReference>
<dbReference type="SMR" id="A0K6C1"/>
<dbReference type="KEGG" id="bch:Bcen2424_1296"/>
<dbReference type="HOGENOM" id="CLU_009422_4_1_4"/>
<dbReference type="GO" id="GO:0005737">
    <property type="term" value="C:cytoplasm"/>
    <property type="evidence" value="ECO:0007669"/>
    <property type="project" value="UniProtKB-SubCell"/>
</dbReference>
<dbReference type="GO" id="GO:0008650">
    <property type="term" value="F:rRNA (uridine-2'-O-)-methyltransferase activity"/>
    <property type="evidence" value="ECO:0007669"/>
    <property type="project" value="UniProtKB-UniRule"/>
</dbReference>
<dbReference type="FunFam" id="3.40.50.150:FF:000005">
    <property type="entry name" value="Ribosomal RNA large subunit methyltransferase E"/>
    <property type="match status" value="1"/>
</dbReference>
<dbReference type="Gene3D" id="3.40.50.150">
    <property type="entry name" value="Vaccinia Virus protein VP39"/>
    <property type="match status" value="1"/>
</dbReference>
<dbReference type="HAMAP" id="MF_01547">
    <property type="entry name" value="RNA_methyltr_E"/>
    <property type="match status" value="1"/>
</dbReference>
<dbReference type="InterPro" id="IPR050082">
    <property type="entry name" value="RNA_methyltr_RlmE"/>
</dbReference>
<dbReference type="InterPro" id="IPR002877">
    <property type="entry name" value="RNA_MeTrfase_FtsJ_dom"/>
</dbReference>
<dbReference type="InterPro" id="IPR015507">
    <property type="entry name" value="rRNA-MeTfrase_E"/>
</dbReference>
<dbReference type="InterPro" id="IPR029063">
    <property type="entry name" value="SAM-dependent_MTases_sf"/>
</dbReference>
<dbReference type="PANTHER" id="PTHR10920">
    <property type="entry name" value="RIBOSOMAL RNA METHYLTRANSFERASE"/>
    <property type="match status" value="1"/>
</dbReference>
<dbReference type="PANTHER" id="PTHR10920:SF18">
    <property type="entry name" value="RRNA METHYLTRANSFERASE 2, MITOCHONDRIAL"/>
    <property type="match status" value="1"/>
</dbReference>
<dbReference type="Pfam" id="PF01728">
    <property type="entry name" value="FtsJ"/>
    <property type="match status" value="1"/>
</dbReference>
<dbReference type="PIRSF" id="PIRSF005461">
    <property type="entry name" value="23S_rRNA_mtase"/>
    <property type="match status" value="1"/>
</dbReference>
<dbReference type="SUPFAM" id="SSF53335">
    <property type="entry name" value="S-adenosyl-L-methionine-dependent methyltransferases"/>
    <property type="match status" value="1"/>
</dbReference>
<organism>
    <name type="scientific">Burkholderia cenocepacia (strain HI2424)</name>
    <dbReference type="NCBI Taxonomy" id="331272"/>
    <lineage>
        <taxon>Bacteria</taxon>
        <taxon>Pseudomonadati</taxon>
        <taxon>Pseudomonadota</taxon>
        <taxon>Betaproteobacteria</taxon>
        <taxon>Burkholderiales</taxon>
        <taxon>Burkholderiaceae</taxon>
        <taxon>Burkholderia</taxon>
        <taxon>Burkholderia cepacia complex</taxon>
    </lineage>
</organism>
<name>RLME_BURCH</name>
<keyword id="KW-0963">Cytoplasm</keyword>
<keyword id="KW-0489">Methyltransferase</keyword>
<keyword id="KW-0698">rRNA processing</keyword>
<keyword id="KW-0949">S-adenosyl-L-methionine</keyword>
<keyword id="KW-0808">Transferase</keyword>